<gene>
    <name evidence="1" type="primary">adk</name>
    <name type="ordered locus">HRM2_17050</name>
</gene>
<keyword id="KW-0067">ATP-binding</keyword>
<keyword id="KW-0963">Cytoplasm</keyword>
<keyword id="KW-0418">Kinase</keyword>
<keyword id="KW-0545">Nucleotide biosynthesis</keyword>
<keyword id="KW-0547">Nucleotide-binding</keyword>
<keyword id="KW-1185">Reference proteome</keyword>
<keyword id="KW-0808">Transferase</keyword>
<feature type="chain" id="PRO_1000204406" description="Adenylate kinase">
    <location>
        <begin position="1"/>
        <end position="224"/>
    </location>
</feature>
<feature type="region of interest" description="NMP" evidence="1">
    <location>
        <begin position="30"/>
        <end position="59"/>
    </location>
</feature>
<feature type="region of interest" description="LID" evidence="1">
    <location>
        <begin position="126"/>
        <end position="165"/>
    </location>
</feature>
<feature type="binding site" evidence="1">
    <location>
        <begin position="10"/>
        <end position="15"/>
    </location>
    <ligand>
        <name>ATP</name>
        <dbReference type="ChEBI" id="CHEBI:30616"/>
    </ligand>
</feature>
<feature type="binding site" evidence="1">
    <location>
        <position position="31"/>
    </location>
    <ligand>
        <name>AMP</name>
        <dbReference type="ChEBI" id="CHEBI:456215"/>
    </ligand>
</feature>
<feature type="binding site" evidence="1">
    <location>
        <position position="36"/>
    </location>
    <ligand>
        <name>AMP</name>
        <dbReference type="ChEBI" id="CHEBI:456215"/>
    </ligand>
</feature>
<feature type="binding site" evidence="1">
    <location>
        <begin position="57"/>
        <end position="59"/>
    </location>
    <ligand>
        <name>AMP</name>
        <dbReference type="ChEBI" id="CHEBI:456215"/>
    </ligand>
</feature>
<feature type="binding site" evidence="1">
    <location>
        <begin position="85"/>
        <end position="88"/>
    </location>
    <ligand>
        <name>AMP</name>
        <dbReference type="ChEBI" id="CHEBI:456215"/>
    </ligand>
</feature>
<feature type="binding site" evidence="1">
    <location>
        <position position="92"/>
    </location>
    <ligand>
        <name>AMP</name>
        <dbReference type="ChEBI" id="CHEBI:456215"/>
    </ligand>
</feature>
<feature type="binding site" evidence="1">
    <location>
        <position position="127"/>
    </location>
    <ligand>
        <name>ATP</name>
        <dbReference type="ChEBI" id="CHEBI:30616"/>
    </ligand>
</feature>
<feature type="binding site" evidence="1">
    <location>
        <position position="162"/>
    </location>
    <ligand>
        <name>AMP</name>
        <dbReference type="ChEBI" id="CHEBI:456215"/>
    </ligand>
</feature>
<feature type="binding site" evidence="1">
    <location>
        <position position="174"/>
    </location>
    <ligand>
        <name>AMP</name>
        <dbReference type="ChEBI" id="CHEBI:456215"/>
    </ligand>
</feature>
<feature type="binding site" evidence="1">
    <location>
        <position position="211"/>
    </location>
    <ligand>
        <name>ATP</name>
        <dbReference type="ChEBI" id="CHEBI:30616"/>
    </ligand>
</feature>
<organism>
    <name type="scientific">Desulforapulum autotrophicum (strain ATCC 43914 / DSM 3382 / VKM B-1955 / HRM2)</name>
    <name type="common">Desulfobacterium autotrophicum</name>
    <dbReference type="NCBI Taxonomy" id="177437"/>
    <lineage>
        <taxon>Bacteria</taxon>
        <taxon>Pseudomonadati</taxon>
        <taxon>Thermodesulfobacteriota</taxon>
        <taxon>Desulfobacteria</taxon>
        <taxon>Desulfobacterales</taxon>
        <taxon>Desulfobacteraceae</taxon>
        <taxon>Desulforapulum</taxon>
    </lineage>
</organism>
<sequence length="224" mass="25038">MNIIFFGPNGSGKGTQGSILKDKYKIAHIESGAIFRDNIKGGTDLGMKAKAYIDKGDLVPDEITIPMILDRLKQDDCAKGWLLDGFPRNKVQAEKLDASLKKEKMKLDIIIEMLLDRQIAKDRIMGRRLCENDNNHPNNIFIDAIKPNGDKCRVCGGALSSRADDQDETAIDKRHSIYYNDVDGTLAAAYYFRDLAKKDDSIKYITLEGKNALPDVTKELVSKL</sequence>
<reference key="1">
    <citation type="journal article" date="2009" name="Environ. Microbiol.">
        <title>Genome sequence of Desulfobacterium autotrophicum HRM2, a marine sulfate reducer oxidizing organic carbon completely to carbon dioxide.</title>
        <authorList>
            <person name="Strittmatter A.W."/>
            <person name="Liesegang H."/>
            <person name="Rabus R."/>
            <person name="Decker I."/>
            <person name="Amann J."/>
            <person name="Andres S."/>
            <person name="Henne A."/>
            <person name="Fricke W.F."/>
            <person name="Martinez-Arias R."/>
            <person name="Bartels D."/>
            <person name="Goesmann A."/>
            <person name="Krause L."/>
            <person name="Puehler A."/>
            <person name="Klenk H.P."/>
            <person name="Richter M."/>
            <person name="Schuler M."/>
            <person name="Gloeckner F.O."/>
            <person name="Meyerdierks A."/>
            <person name="Gottschalk G."/>
            <person name="Amann R."/>
        </authorList>
    </citation>
    <scope>NUCLEOTIDE SEQUENCE [LARGE SCALE GENOMIC DNA]</scope>
    <source>
        <strain>ATCC 43914 / DSM 3382 / VKM B-1955 / HRM2</strain>
    </source>
</reference>
<comment type="function">
    <text evidence="1">Catalyzes the reversible transfer of the terminal phosphate group between ATP and AMP. Plays an important role in cellular energy homeostasis and in adenine nucleotide metabolism.</text>
</comment>
<comment type="catalytic activity">
    <reaction evidence="1">
        <text>AMP + ATP = 2 ADP</text>
        <dbReference type="Rhea" id="RHEA:12973"/>
        <dbReference type="ChEBI" id="CHEBI:30616"/>
        <dbReference type="ChEBI" id="CHEBI:456215"/>
        <dbReference type="ChEBI" id="CHEBI:456216"/>
        <dbReference type="EC" id="2.7.4.3"/>
    </reaction>
</comment>
<comment type="pathway">
    <text evidence="1">Purine metabolism; AMP biosynthesis via salvage pathway; AMP from ADP: step 1/1.</text>
</comment>
<comment type="subunit">
    <text evidence="1">Monomer.</text>
</comment>
<comment type="subcellular location">
    <subcellularLocation>
        <location evidence="1">Cytoplasm</location>
    </subcellularLocation>
</comment>
<comment type="domain">
    <text evidence="1">Consists of three domains, a large central CORE domain and two small peripheral domains, NMPbind and LID, which undergo movements during catalysis. The LID domain closes over the site of phosphoryl transfer upon ATP binding. Assembling and dissambling the active center during each catalytic cycle provides an effective means to prevent ATP hydrolysis.</text>
</comment>
<comment type="similarity">
    <text evidence="1">Belongs to the adenylate kinase family.</text>
</comment>
<proteinExistence type="inferred from homology"/>
<protein>
    <recommendedName>
        <fullName evidence="1">Adenylate kinase</fullName>
        <shortName evidence="1">AK</shortName>
        <ecNumber evidence="1">2.7.4.3</ecNumber>
    </recommendedName>
    <alternativeName>
        <fullName evidence="1">ATP-AMP transphosphorylase</fullName>
    </alternativeName>
    <alternativeName>
        <fullName evidence="1">ATP:AMP phosphotransferase</fullName>
    </alternativeName>
    <alternativeName>
        <fullName evidence="1">Adenylate monophosphate kinase</fullName>
    </alternativeName>
</protein>
<evidence type="ECO:0000255" key="1">
    <source>
        <dbReference type="HAMAP-Rule" id="MF_00235"/>
    </source>
</evidence>
<dbReference type="EC" id="2.7.4.3" evidence="1"/>
<dbReference type="EMBL" id="CP001087">
    <property type="protein sequence ID" value="ACN14811.1"/>
    <property type="molecule type" value="Genomic_DNA"/>
</dbReference>
<dbReference type="RefSeq" id="WP_015903598.1">
    <property type="nucleotide sequence ID" value="NC_012108.1"/>
</dbReference>
<dbReference type="SMR" id="C0QB12"/>
<dbReference type="STRING" id="177437.HRM2_17050"/>
<dbReference type="KEGG" id="dat:HRM2_17050"/>
<dbReference type="eggNOG" id="COG0563">
    <property type="taxonomic scope" value="Bacteria"/>
</dbReference>
<dbReference type="HOGENOM" id="CLU_032354_1_2_7"/>
<dbReference type="OrthoDB" id="9805030at2"/>
<dbReference type="UniPathway" id="UPA00588">
    <property type="reaction ID" value="UER00649"/>
</dbReference>
<dbReference type="Proteomes" id="UP000000442">
    <property type="component" value="Chromosome"/>
</dbReference>
<dbReference type="GO" id="GO:0005737">
    <property type="term" value="C:cytoplasm"/>
    <property type="evidence" value="ECO:0007669"/>
    <property type="project" value="UniProtKB-SubCell"/>
</dbReference>
<dbReference type="GO" id="GO:0004017">
    <property type="term" value="F:adenylate kinase activity"/>
    <property type="evidence" value="ECO:0007669"/>
    <property type="project" value="UniProtKB-UniRule"/>
</dbReference>
<dbReference type="GO" id="GO:0005524">
    <property type="term" value="F:ATP binding"/>
    <property type="evidence" value="ECO:0007669"/>
    <property type="project" value="UniProtKB-UniRule"/>
</dbReference>
<dbReference type="GO" id="GO:0044209">
    <property type="term" value="P:AMP salvage"/>
    <property type="evidence" value="ECO:0007669"/>
    <property type="project" value="UniProtKB-UniRule"/>
</dbReference>
<dbReference type="CDD" id="cd01428">
    <property type="entry name" value="ADK"/>
    <property type="match status" value="1"/>
</dbReference>
<dbReference type="Gene3D" id="3.40.50.300">
    <property type="entry name" value="P-loop containing nucleotide triphosphate hydrolases"/>
    <property type="match status" value="1"/>
</dbReference>
<dbReference type="HAMAP" id="MF_00235">
    <property type="entry name" value="Adenylate_kinase_Adk"/>
    <property type="match status" value="1"/>
</dbReference>
<dbReference type="InterPro" id="IPR006259">
    <property type="entry name" value="Adenyl_kin_sub"/>
</dbReference>
<dbReference type="InterPro" id="IPR000850">
    <property type="entry name" value="Adenylat/UMP-CMP_kin"/>
</dbReference>
<dbReference type="InterPro" id="IPR033690">
    <property type="entry name" value="Adenylat_kinase_CS"/>
</dbReference>
<dbReference type="InterPro" id="IPR027417">
    <property type="entry name" value="P-loop_NTPase"/>
</dbReference>
<dbReference type="NCBIfam" id="TIGR01351">
    <property type="entry name" value="adk"/>
    <property type="match status" value="1"/>
</dbReference>
<dbReference type="NCBIfam" id="NF011102">
    <property type="entry name" value="PRK14529.1"/>
    <property type="match status" value="1"/>
</dbReference>
<dbReference type="PANTHER" id="PTHR23359">
    <property type="entry name" value="NUCLEOTIDE KINASE"/>
    <property type="match status" value="1"/>
</dbReference>
<dbReference type="Pfam" id="PF00406">
    <property type="entry name" value="ADK"/>
    <property type="match status" value="1"/>
</dbReference>
<dbReference type="PRINTS" id="PR00094">
    <property type="entry name" value="ADENYLTKNASE"/>
</dbReference>
<dbReference type="SUPFAM" id="SSF52540">
    <property type="entry name" value="P-loop containing nucleoside triphosphate hydrolases"/>
    <property type="match status" value="1"/>
</dbReference>
<dbReference type="PROSITE" id="PS00113">
    <property type="entry name" value="ADENYLATE_KINASE"/>
    <property type="match status" value="1"/>
</dbReference>
<name>KAD_DESAH</name>
<accession>C0QB12</accession>